<gene>
    <name evidence="1" type="primary">rpsE</name>
    <name type="ordered locus">ECA4014</name>
</gene>
<comment type="function">
    <text evidence="1">With S4 and S12 plays an important role in translational accuracy.</text>
</comment>
<comment type="function">
    <text evidence="1">Located at the back of the 30S subunit body where it stabilizes the conformation of the head with respect to the body.</text>
</comment>
<comment type="subunit">
    <text evidence="1">Part of the 30S ribosomal subunit. Contacts proteins S4 and S8.</text>
</comment>
<comment type="domain">
    <text>The N-terminal domain interacts with the head of the 30S subunit; the C-terminal domain interacts with the body and contacts protein S4. The interaction surface between S4 and S5 is involved in control of translational fidelity.</text>
</comment>
<comment type="similarity">
    <text evidence="1">Belongs to the universal ribosomal protein uS5 family.</text>
</comment>
<accession>Q6CZY7</accession>
<proteinExistence type="inferred from homology"/>
<sequence>MAHIEKQAGELQEKLIAVNRVSKTVKGGRIFSFTALTVVGDGNGRVGFGYGKAREVPAAIQKAMEKARRNMMNVALNNGTLQHPVKGAHTGSRVFMQPASEGTGIIAGGAMRAVLEVAGVHNVLAKAYGSTNPINVVRATIDGLANMKSPEMVAAKRGKSVEEILG</sequence>
<dbReference type="EMBL" id="BX950851">
    <property type="protein sequence ID" value="CAG76911.1"/>
    <property type="molecule type" value="Genomic_DNA"/>
</dbReference>
<dbReference type="RefSeq" id="WP_005970257.1">
    <property type="nucleotide sequence ID" value="NC_004547.2"/>
</dbReference>
<dbReference type="SMR" id="Q6CZY7"/>
<dbReference type="STRING" id="218491.ECA4014"/>
<dbReference type="GeneID" id="93391963"/>
<dbReference type="KEGG" id="eca:ECA4014"/>
<dbReference type="eggNOG" id="COG0098">
    <property type="taxonomic scope" value="Bacteria"/>
</dbReference>
<dbReference type="HOGENOM" id="CLU_065898_2_2_6"/>
<dbReference type="OrthoDB" id="9809045at2"/>
<dbReference type="Proteomes" id="UP000007966">
    <property type="component" value="Chromosome"/>
</dbReference>
<dbReference type="GO" id="GO:0015935">
    <property type="term" value="C:small ribosomal subunit"/>
    <property type="evidence" value="ECO:0007669"/>
    <property type="project" value="InterPro"/>
</dbReference>
<dbReference type="GO" id="GO:0019843">
    <property type="term" value="F:rRNA binding"/>
    <property type="evidence" value="ECO:0007669"/>
    <property type="project" value="UniProtKB-UniRule"/>
</dbReference>
<dbReference type="GO" id="GO:0003735">
    <property type="term" value="F:structural constituent of ribosome"/>
    <property type="evidence" value="ECO:0007669"/>
    <property type="project" value="InterPro"/>
</dbReference>
<dbReference type="GO" id="GO:0006412">
    <property type="term" value="P:translation"/>
    <property type="evidence" value="ECO:0007669"/>
    <property type="project" value="UniProtKB-UniRule"/>
</dbReference>
<dbReference type="FunFam" id="3.30.160.20:FF:000001">
    <property type="entry name" value="30S ribosomal protein S5"/>
    <property type="match status" value="1"/>
</dbReference>
<dbReference type="FunFam" id="3.30.230.10:FF:000002">
    <property type="entry name" value="30S ribosomal protein S5"/>
    <property type="match status" value="1"/>
</dbReference>
<dbReference type="Gene3D" id="3.30.160.20">
    <property type="match status" value="1"/>
</dbReference>
<dbReference type="Gene3D" id="3.30.230.10">
    <property type="match status" value="1"/>
</dbReference>
<dbReference type="HAMAP" id="MF_01307_B">
    <property type="entry name" value="Ribosomal_uS5_B"/>
    <property type="match status" value="1"/>
</dbReference>
<dbReference type="InterPro" id="IPR020568">
    <property type="entry name" value="Ribosomal_Su5_D2-typ_SF"/>
</dbReference>
<dbReference type="InterPro" id="IPR000851">
    <property type="entry name" value="Ribosomal_uS5"/>
</dbReference>
<dbReference type="InterPro" id="IPR005712">
    <property type="entry name" value="Ribosomal_uS5_bac-type"/>
</dbReference>
<dbReference type="InterPro" id="IPR005324">
    <property type="entry name" value="Ribosomal_uS5_C"/>
</dbReference>
<dbReference type="InterPro" id="IPR013810">
    <property type="entry name" value="Ribosomal_uS5_N"/>
</dbReference>
<dbReference type="InterPro" id="IPR018192">
    <property type="entry name" value="Ribosomal_uS5_N_CS"/>
</dbReference>
<dbReference type="InterPro" id="IPR014721">
    <property type="entry name" value="Ribsml_uS5_D2-typ_fold_subgr"/>
</dbReference>
<dbReference type="NCBIfam" id="TIGR01021">
    <property type="entry name" value="rpsE_bact"/>
    <property type="match status" value="1"/>
</dbReference>
<dbReference type="PANTHER" id="PTHR48277">
    <property type="entry name" value="MITOCHONDRIAL RIBOSOMAL PROTEIN S5"/>
    <property type="match status" value="1"/>
</dbReference>
<dbReference type="PANTHER" id="PTHR48277:SF1">
    <property type="entry name" value="MITOCHONDRIAL RIBOSOMAL PROTEIN S5"/>
    <property type="match status" value="1"/>
</dbReference>
<dbReference type="Pfam" id="PF00333">
    <property type="entry name" value="Ribosomal_S5"/>
    <property type="match status" value="1"/>
</dbReference>
<dbReference type="Pfam" id="PF03719">
    <property type="entry name" value="Ribosomal_S5_C"/>
    <property type="match status" value="1"/>
</dbReference>
<dbReference type="SUPFAM" id="SSF54768">
    <property type="entry name" value="dsRNA-binding domain-like"/>
    <property type="match status" value="1"/>
</dbReference>
<dbReference type="SUPFAM" id="SSF54211">
    <property type="entry name" value="Ribosomal protein S5 domain 2-like"/>
    <property type="match status" value="1"/>
</dbReference>
<dbReference type="PROSITE" id="PS00585">
    <property type="entry name" value="RIBOSOMAL_S5"/>
    <property type="match status" value="1"/>
</dbReference>
<dbReference type="PROSITE" id="PS50881">
    <property type="entry name" value="S5_DSRBD"/>
    <property type="match status" value="1"/>
</dbReference>
<feature type="chain" id="PRO_0000131515" description="Small ribosomal subunit protein uS5">
    <location>
        <begin position="1"/>
        <end position="166"/>
    </location>
</feature>
<feature type="domain" description="S5 DRBM" evidence="1">
    <location>
        <begin position="11"/>
        <end position="74"/>
    </location>
</feature>
<name>RS5_PECAS</name>
<organism>
    <name type="scientific">Pectobacterium atrosepticum (strain SCRI 1043 / ATCC BAA-672)</name>
    <name type="common">Erwinia carotovora subsp. atroseptica</name>
    <dbReference type="NCBI Taxonomy" id="218491"/>
    <lineage>
        <taxon>Bacteria</taxon>
        <taxon>Pseudomonadati</taxon>
        <taxon>Pseudomonadota</taxon>
        <taxon>Gammaproteobacteria</taxon>
        <taxon>Enterobacterales</taxon>
        <taxon>Pectobacteriaceae</taxon>
        <taxon>Pectobacterium</taxon>
    </lineage>
</organism>
<evidence type="ECO:0000255" key="1">
    <source>
        <dbReference type="HAMAP-Rule" id="MF_01307"/>
    </source>
</evidence>
<evidence type="ECO:0000305" key="2"/>
<protein>
    <recommendedName>
        <fullName evidence="1">Small ribosomal subunit protein uS5</fullName>
    </recommendedName>
    <alternativeName>
        <fullName evidence="2">30S ribosomal protein S5</fullName>
    </alternativeName>
</protein>
<reference key="1">
    <citation type="journal article" date="2004" name="Proc. Natl. Acad. Sci. U.S.A.">
        <title>Genome sequence of the enterobacterial phytopathogen Erwinia carotovora subsp. atroseptica and characterization of virulence factors.</title>
        <authorList>
            <person name="Bell K.S."/>
            <person name="Sebaihia M."/>
            <person name="Pritchard L."/>
            <person name="Holden M.T.G."/>
            <person name="Hyman L.J."/>
            <person name="Holeva M.C."/>
            <person name="Thomson N.R."/>
            <person name="Bentley S.D."/>
            <person name="Churcher L.J.C."/>
            <person name="Mungall K."/>
            <person name="Atkin R."/>
            <person name="Bason N."/>
            <person name="Brooks K."/>
            <person name="Chillingworth T."/>
            <person name="Clark K."/>
            <person name="Doggett J."/>
            <person name="Fraser A."/>
            <person name="Hance Z."/>
            <person name="Hauser H."/>
            <person name="Jagels K."/>
            <person name="Moule S."/>
            <person name="Norbertczak H."/>
            <person name="Ormond D."/>
            <person name="Price C."/>
            <person name="Quail M.A."/>
            <person name="Sanders M."/>
            <person name="Walker D."/>
            <person name="Whitehead S."/>
            <person name="Salmond G.P.C."/>
            <person name="Birch P.R.J."/>
            <person name="Parkhill J."/>
            <person name="Toth I.K."/>
        </authorList>
    </citation>
    <scope>NUCLEOTIDE SEQUENCE [LARGE SCALE GENOMIC DNA]</scope>
    <source>
        <strain>SCRI 1043 / ATCC BAA-672</strain>
    </source>
</reference>
<keyword id="KW-1185">Reference proteome</keyword>
<keyword id="KW-0687">Ribonucleoprotein</keyword>
<keyword id="KW-0689">Ribosomal protein</keyword>
<keyword id="KW-0694">RNA-binding</keyword>
<keyword id="KW-0699">rRNA-binding</keyword>